<comment type="function">
    <text evidence="2 4">Maximin-5 shows antibacterial activity against both Gram-positive and Gram-negative bacteria. The only exception is the resistance of E.coli. Also shows antimicrobial activity against fungi C.albicans, A.flavus and P.uticale. It has little hemolytic activity. It does not possess a significant cytotoxicity against tumor cell lines. It does not possess a significant anti-HIV activity.</text>
</comment>
<comment type="function">
    <text evidence="2 4">Maximin-H4 shows antibacterial activity against both Gram-positive and Gram-negative bacteria. It also shows antimicrobial activity against the fungus C.albicans. Shows strong hemolytic activity.</text>
</comment>
<comment type="subcellular location">
    <subcellularLocation>
        <location evidence="4">Secreted</location>
    </subcellularLocation>
</comment>
<comment type="tissue specificity">
    <text evidence="4">Expressed by the skin glands.</text>
</comment>
<comment type="mass spectrometry">
    <molecule>Maximin-5</molecule>
</comment>
<comment type="mass spectrometry">
    <molecule>Maximin-H4</molecule>
</comment>
<comment type="similarity">
    <text evidence="1">Belongs to the bombinin family.</text>
</comment>
<organism evidence="5">
    <name type="scientific">Bombina maxima</name>
    <name type="common">Giant fire-bellied toad</name>
    <name type="synonym">Chinese red belly toad</name>
    <dbReference type="NCBI Taxonomy" id="161274"/>
    <lineage>
        <taxon>Eukaryota</taxon>
        <taxon>Metazoa</taxon>
        <taxon>Chordata</taxon>
        <taxon>Craniata</taxon>
        <taxon>Vertebrata</taxon>
        <taxon>Euteleostomi</taxon>
        <taxon>Amphibia</taxon>
        <taxon>Batrachia</taxon>
        <taxon>Anura</taxon>
        <taxon>Bombinatoridae</taxon>
        <taxon>Bombina</taxon>
    </lineage>
</organism>
<protein>
    <recommendedName>
        <fullName>Maximins 5/H4 type 1</fullName>
    </recommendedName>
    <component>
        <recommendedName>
            <fullName>Maximin-5</fullName>
        </recommendedName>
    </component>
    <component>
        <recommendedName>
            <fullName>Maximin-H4</fullName>
        </recommendedName>
    </component>
</protein>
<accession>P83084</accession>
<name>M5H41_BOMMX</name>
<feature type="signal peptide" evidence="1">
    <location>
        <begin position="1"/>
        <end position="18"/>
    </location>
</feature>
<feature type="propeptide" id="PRO_0000003180" evidence="1 2 4">
    <location>
        <begin position="19"/>
        <end position="43"/>
    </location>
</feature>
<feature type="peptide" id="PRO_0000003181" description="Maximin-5" evidence="2 4">
    <location>
        <begin position="44"/>
        <end position="70"/>
    </location>
</feature>
<feature type="propeptide" id="PRO_0000003182" evidence="2 4">
    <location>
        <begin position="74"/>
        <end position="124"/>
    </location>
</feature>
<feature type="peptide" id="PRO_0000003183" description="Maximin-H4" evidence="2 4">
    <location>
        <begin position="125"/>
        <end position="144"/>
    </location>
</feature>
<feature type="modified residue" description="Leucine amide" evidence="2 3">
    <location>
        <position position="144"/>
    </location>
</feature>
<reference key="1">
    <citation type="journal article" date="2002" name="Peptides">
        <title>Antimicrobial peptides from skin secretions of Chinese red belly toad Bombina maxima.</title>
        <authorList>
            <person name="Lai R."/>
            <person name="Zheng Y.-T."/>
            <person name="Shen J.-H."/>
            <person name="Liu G.-J."/>
            <person name="Liu H."/>
            <person name="Lee W.-H."/>
            <person name="Tang S.-Z."/>
            <person name="Zhang Y."/>
        </authorList>
    </citation>
    <scope>NUCLEOTIDE SEQUENCE [MRNA]</scope>
    <scope>PROTEIN SEQUENCE OF 44-70 AND 125-144</scope>
    <scope>AMIDATION AT LEU-144</scope>
    <scope>FUNCTION OF MAXIMIN-5 AND MAXIMIN-H4</scope>
    <scope>MASS SPECTROMETRY</scope>
    <source>
        <tissue evidence="2">Skin</tissue>
        <tissue evidence="2">Skin secretion</tissue>
    </source>
</reference>
<reference key="2">
    <citation type="journal article" date="2005" name="Eur. J. Immunol.">
        <title>Variety of antimicrobial peptides in the Bombina maxima toad and evidence of their rapid diversification.</title>
        <authorList>
            <person name="Lee W.-H."/>
            <person name="Li Y."/>
            <person name="Lai R."/>
            <person name="Li S."/>
            <person name="Zhang Y."/>
            <person name="Wang W."/>
        </authorList>
    </citation>
    <scope>NUCLEOTIDE SEQUENCE [MRNA]</scope>
    <scope>AMIDATION AT LEU-144</scope>
    <source>
        <tissue>Skin</tissue>
    </source>
</reference>
<reference key="3">
    <citation type="submission" date="2001-07" db="UniProtKB">
        <title>Isolation and structural characterisation of antimicrobial peptides from the venom of the Chinese large-webbed bell toad (Bombina maxima).</title>
        <authorList>
            <person name="Chen T.B."/>
            <person name="McClean S."/>
            <person name="Orr D.F."/>
            <person name="Bjourson A.J."/>
            <person name="Rao P.F."/>
            <person name="Shaw C."/>
        </authorList>
    </citation>
    <scope>PROTEIN SEQUENCE OF 44-70</scope>
    <scope>FUNCTION OF MAXIMIN-5</scope>
    <scope>SUBCELLULAR LOCATION</scope>
    <scope>TISSUE SPECIFICITY</scope>
    <source>
        <tissue evidence="4">Skin secretion</tissue>
    </source>
</reference>
<proteinExistence type="evidence at protein level"/>
<sequence>MNFKYIVAVSFLIASAYARSVQNDEQSLSQRDVLEEESLREIRSIGAKILGGVKTFFKGALKELASTYLQRKRTAEEQHEVMKRLEAVMRDLDSLDHPEEASEREIRGFNQEEIANLFTKKEKRILGPVISKIGGVLGGLLKNLG</sequence>
<evidence type="ECO:0000255" key="1"/>
<evidence type="ECO:0000269" key="2">
    <source>
    </source>
</evidence>
<evidence type="ECO:0000269" key="3">
    <source>
    </source>
</evidence>
<evidence type="ECO:0000269" key="4">
    <source ref="3"/>
</evidence>
<evidence type="ECO:0000312" key="5">
    <source>
        <dbReference type="EMBL" id="AAK63258.1"/>
    </source>
</evidence>
<keyword id="KW-0027">Amidation</keyword>
<keyword id="KW-0878">Amphibian defense peptide</keyword>
<keyword id="KW-0044">Antibiotic</keyword>
<keyword id="KW-0929">Antimicrobial</keyword>
<keyword id="KW-0165">Cleavage on pair of basic residues</keyword>
<keyword id="KW-0204">Cytolysis</keyword>
<keyword id="KW-0903">Direct protein sequencing</keyword>
<keyword id="KW-0295">Fungicide</keyword>
<keyword id="KW-0354">Hemolysis</keyword>
<keyword id="KW-0964">Secreted</keyword>
<keyword id="KW-0732">Signal</keyword>
<dbReference type="EMBL" id="AF378908">
    <property type="protein sequence ID" value="AAK63258.1"/>
    <property type="molecule type" value="mRNA"/>
</dbReference>
<dbReference type="SMR" id="P83084"/>
<dbReference type="GO" id="GO:0005576">
    <property type="term" value="C:extracellular region"/>
    <property type="evidence" value="ECO:0007669"/>
    <property type="project" value="UniProtKB-SubCell"/>
</dbReference>
<dbReference type="GO" id="GO:0042742">
    <property type="term" value="P:defense response to bacterium"/>
    <property type="evidence" value="ECO:0007669"/>
    <property type="project" value="UniProtKB-KW"/>
</dbReference>
<dbReference type="GO" id="GO:0050832">
    <property type="term" value="P:defense response to fungus"/>
    <property type="evidence" value="ECO:0007669"/>
    <property type="project" value="UniProtKB-KW"/>
</dbReference>
<dbReference type="GO" id="GO:0031640">
    <property type="term" value="P:killing of cells of another organism"/>
    <property type="evidence" value="ECO:0007669"/>
    <property type="project" value="UniProtKB-KW"/>
</dbReference>
<dbReference type="InterPro" id="IPR007962">
    <property type="entry name" value="Bombinin"/>
</dbReference>
<dbReference type="Pfam" id="PF05298">
    <property type="entry name" value="Bombinin"/>
    <property type="match status" value="1"/>
</dbReference>